<gene>
    <name evidence="1" type="primary">nuoA</name>
    <name type="ordered locus">YPTS_2682</name>
</gene>
<keyword id="KW-0997">Cell inner membrane</keyword>
<keyword id="KW-1003">Cell membrane</keyword>
<keyword id="KW-0472">Membrane</keyword>
<keyword id="KW-0520">NAD</keyword>
<keyword id="KW-0874">Quinone</keyword>
<keyword id="KW-1278">Translocase</keyword>
<keyword id="KW-0812">Transmembrane</keyword>
<keyword id="KW-1133">Transmembrane helix</keyword>
<keyword id="KW-0813">Transport</keyword>
<keyword id="KW-0830">Ubiquinone</keyword>
<dbReference type="EC" id="7.1.1.-" evidence="1"/>
<dbReference type="EMBL" id="CP001048">
    <property type="protein sequence ID" value="ACC89642.1"/>
    <property type="molecule type" value="Genomic_DNA"/>
</dbReference>
<dbReference type="RefSeq" id="WP_012413807.1">
    <property type="nucleotide sequence ID" value="NZ_CP009780.1"/>
</dbReference>
<dbReference type="SMR" id="B2K821"/>
<dbReference type="KEGG" id="ypb:YPTS_2682"/>
<dbReference type="GO" id="GO:0030964">
    <property type="term" value="C:NADH dehydrogenase complex"/>
    <property type="evidence" value="ECO:0007669"/>
    <property type="project" value="TreeGrafter"/>
</dbReference>
<dbReference type="GO" id="GO:0005886">
    <property type="term" value="C:plasma membrane"/>
    <property type="evidence" value="ECO:0007669"/>
    <property type="project" value="UniProtKB-SubCell"/>
</dbReference>
<dbReference type="GO" id="GO:0008137">
    <property type="term" value="F:NADH dehydrogenase (ubiquinone) activity"/>
    <property type="evidence" value="ECO:0007669"/>
    <property type="project" value="InterPro"/>
</dbReference>
<dbReference type="GO" id="GO:0050136">
    <property type="term" value="F:NADH:ubiquinone reductase (non-electrogenic) activity"/>
    <property type="evidence" value="ECO:0007669"/>
    <property type="project" value="UniProtKB-UniRule"/>
</dbReference>
<dbReference type="GO" id="GO:0048038">
    <property type="term" value="F:quinone binding"/>
    <property type="evidence" value="ECO:0007669"/>
    <property type="project" value="UniProtKB-KW"/>
</dbReference>
<dbReference type="FunFam" id="1.20.58.1610:FF:000003">
    <property type="entry name" value="NADH-quinone oxidoreductase subunit A"/>
    <property type="match status" value="1"/>
</dbReference>
<dbReference type="Gene3D" id="1.20.58.1610">
    <property type="entry name" value="NADH:ubiquinone/plastoquinone oxidoreductase, chain 3"/>
    <property type="match status" value="1"/>
</dbReference>
<dbReference type="HAMAP" id="MF_01394">
    <property type="entry name" value="NDH1_NuoA"/>
    <property type="match status" value="1"/>
</dbReference>
<dbReference type="InterPro" id="IPR023043">
    <property type="entry name" value="NAD(P)H_OxRDtase_bac/plastid"/>
</dbReference>
<dbReference type="InterPro" id="IPR000440">
    <property type="entry name" value="NADH_UbQ/plastoQ_OxRdtase_su3"/>
</dbReference>
<dbReference type="InterPro" id="IPR038430">
    <property type="entry name" value="NDAH_ubi_oxred_su3_sf"/>
</dbReference>
<dbReference type="PANTHER" id="PTHR11058:SF21">
    <property type="entry name" value="NADH-QUINONE OXIDOREDUCTASE SUBUNIT A"/>
    <property type="match status" value="1"/>
</dbReference>
<dbReference type="PANTHER" id="PTHR11058">
    <property type="entry name" value="NADH-UBIQUINONE OXIDOREDUCTASE CHAIN 3"/>
    <property type="match status" value="1"/>
</dbReference>
<dbReference type="Pfam" id="PF00507">
    <property type="entry name" value="Oxidored_q4"/>
    <property type="match status" value="1"/>
</dbReference>
<sequence length="166" mass="18404">MRMSTTTEIIAHHWAFAVFLIGAVGLCGLMLLGAYFLGGRAQARAKNVPYESGIDSVGSARMRLSAKFYLVAMFFVIFDVEALYLYAWSISIRESGWIGFIEAVIFILVLLAGLFYLVRIGALDWTPTRSNRRVSKPSTVRYASSHPQDISQELSVAGSQQANESR</sequence>
<proteinExistence type="inferred from homology"/>
<feature type="chain" id="PRO_5000345846" description="NADH-quinone oxidoreductase subunit A">
    <location>
        <begin position="1"/>
        <end position="166"/>
    </location>
</feature>
<feature type="transmembrane region" description="Helical" evidence="1">
    <location>
        <begin position="16"/>
        <end position="36"/>
    </location>
</feature>
<feature type="transmembrane region" description="Helical" evidence="1">
    <location>
        <begin position="68"/>
        <end position="88"/>
    </location>
</feature>
<feature type="transmembrane region" description="Helical" evidence="1">
    <location>
        <begin position="98"/>
        <end position="118"/>
    </location>
</feature>
<feature type="region of interest" description="Disordered" evidence="2">
    <location>
        <begin position="141"/>
        <end position="166"/>
    </location>
</feature>
<accession>B2K821</accession>
<evidence type="ECO:0000255" key="1">
    <source>
        <dbReference type="HAMAP-Rule" id="MF_01394"/>
    </source>
</evidence>
<evidence type="ECO:0000256" key="2">
    <source>
        <dbReference type="SAM" id="MobiDB-lite"/>
    </source>
</evidence>
<protein>
    <recommendedName>
        <fullName evidence="1">NADH-quinone oxidoreductase subunit A</fullName>
        <ecNumber evidence="1">7.1.1.-</ecNumber>
    </recommendedName>
    <alternativeName>
        <fullName evidence="1">NADH dehydrogenase I subunit A</fullName>
    </alternativeName>
    <alternativeName>
        <fullName evidence="1">NDH-1 subunit A</fullName>
    </alternativeName>
    <alternativeName>
        <fullName evidence="1">NUO1</fullName>
    </alternativeName>
</protein>
<organism>
    <name type="scientific">Yersinia pseudotuberculosis serotype IB (strain PB1/+)</name>
    <dbReference type="NCBI Taxonomy" id="502801"/>
    <lineage>
        <taxon>Bacteria</taxon>
        <taxon>Pseudomonadati</taxon>
        <taxon>Pseudomonadota</taxon>
        <taxon>Gammaproteobacteria</taxon>
        <taxon>Enterobacterales</taxon>
        <taxon>Yersiniaceae</taxon>
        <taxon>Yersinia</taxon>
    </lineage>
</organism>
<reference key="1">
    <citation type="submission" date="2008-04" db="EMBL/GenBank/DDBJ databases">
        <title>Complete sequence of Yersinia pseudotuberculosis PB1/+.</title>
        <authorList>
            <person name="Copeland A."/>
            <person name="Lucas S."/>
            <person name="Lapidus A."/>
            <person name="Glavina del Rio T."/>
            <person name="Dalin E."/>
            <person name="Tice H."/>
            <person name="Bruce D."/>
            <person name="Goodwin L."/>
            <person name="Pitluck S."/>
            <person name="Munk A.C."/>
            <person name="Brettin T."/>
            <person name="Detter J.C."/>
            <person name="Han C."/>
            <person name="Tapia R."/>
            <person name="Schmutz J."/>
            <person name="Larimer F."/>
            <person name="Land M."/>
            <person name="Hauser L."/>
            <person name="Challacombe J.F."/>
            <person name="Green L."/>
            <person name="Lindler L.E."/>
            <person name="Nikolich M.P."/>
            <person name="Richardson P."/>
        </authorList>
    </citation>
    <scope>NUCLEOTIDE SEQUENCE [LARGE SCALE GENOMIC DNA]</scope>
    <source>
        <strain>PB1/+</strain>
    </source>
</reference>
<comment type="function">
    <text evidence="1">NDH-1 shuttles electrons from NADH, via FMN and iron-sulfur (Fe-S) centers, to quinones in the respiratory chain. The immediate electron acceptor for the enzyme in this species is believed to be ubiquinone. Couples the redox reaction to proton translocation (for every two electrons transferred, four hydrogen ions are translocated across the cytoplasmic membrane), and thus conserves the redox energy in a proton gradient.</text>
</comment>
<comment type="catalytic activity">
    <reaction evidence="1">
        <text>a quinone + NADH + 5 H(+)(in) = a quinol + NAD(+) + 4 H(+)(out)</text>
        <dbReference type="Rhea" id="RHEA:57888"/>
        <dbReference type="ChEBI" id="CHEBI:15378"/>
        <dbReference type="ChEBI" id="CHEBI:24646"/>
        <dbReference type="ChEBI" id="CHEBI:57540"/>
        <dbReference type="ChEBI" id="CHEBI:57945"/>
        <dbReference type="ChEBI" id="CHEBI:132124"/>
    </reaction>
</comment>
<comment type="subunit">
    <text evidence="1">NDH-1 is composed of 13 different subunits. Subunits NuoA, H, J, K, L, M, N constitute the membrane sector of the complex.</text>
</comment>
<comment type="subcellular location">
    <subcellularLocation>
        <location evidence="1">Cell inner membrane</location>
        <topology evidence="1">Multi-pass membrane protein</topology>
    </subcellularLocation>
</comment>
<comment type="similarity">
    <text evidence="1">Belongs to the complex I subunit 3 family.</text>
</comment>
<name>NUOA_YERPB</name>